<reference key="1">
    <citation type="journal article" date="2011" name="J. Bacteriol.">
        <title>Comparative genomics of 28 Salmonella enterica isolates: evidence for CRISPR-mediated adaptive sublineage evolution.</title>
        <authorList>
            <person name="Fricke W.F."/>
            <person name="Mammel M.K."/>
            <person name="McDermott P.F."/>
            <person name="Tartera C."/>
            <person name="White D.G."/>
            <person name="Leclerc J.E."/>
            <person name="Ravel J."/>
            <person name="Cebula T.A."/>
        </authorList>
    </citation>
    <scope>NUCLEOTIDE SEQUENCE [LARGE SCALE GENOMIC DNA]</scope>
    <source>
        <strain>SL483</strain>
    </source>
</reference>
<keyword id="KW-0067">ATP-binding</keyword>
<keyword id="KW-0460">Magnesium</keyword>
<keyword id="KW-0511">Multifunctional enzyme</keyword>
<keyword id="KW-0547">Nucleotide-binding</keyword>
<keyword id="KW-0548">Nucleotidyltransferase</keyword>
<keyword id="KW-0808">Transferase</keyword>
<protein>
    <recommendedName>
        <fullName evidence="1">Bifunctional glutamine synthetase adenylyltransferase/adenylyl-removing enzyme</fullName>
    </recommendedName>
    <alternativeName>
        <fullName evidence="1">ATP:glutamine synthetase adenylyltransferase</fullName>
    </alternativeName>
    <alternativeName>
        <fullName evidence="1">ATase</fullName>
    </alternativeName>
    <domain>
        <recommendedName>
            <fullName evidence="1">Glutamine synthetase adenylyl-L-tyrosine phosphorylase</fullName>
            <ecNumber evidence="1">2.7.7.89</ecNumber>
        </recommendedName>
        <alternativeName>
            <fullName evidence="1">Adenylyl removase</fullName>
            <shortName evidence="1">AR</shortName>
            <shortName evidence="1">AT-N</shortName>
        </alternativeName>
    </domain>
    <domain>
        <recommendedName>
            <fullName evidence="1">Glutamine synthetase adenylyl transferase</fullName>
            <ecNumber evidence="1">2.7.7.42</ecNumber>
        </recommendedName>
        <alternativeName>
            <fullName evidence="1">Adenylyl transferase</fullName>
            <shortName evidence="1">AT</shortName>
            <shortName evidence="1">AT-C</shortName>
        </alternativeName>
    </domain>
</protein>
<dbReference type="EC" id="2.7.7.89" evidence="1"/>
<dbReference type="EC" id="2.7.7.42" evidence="1"/>
<dbReference type="EMBL" id="CP001138">
    <property type="protein sequence ID" value="ACH52326.1"/>
    <property type="molecule type" value="Genomic_DNA"/>
</dbReference>
<dbReference type="RefSeq" id="WP_000188316.1">
    <property type="nucleotide sequence ID" value="NC_011149.1"/>
</dbReference>
<dbReference type="SMR" id="B5F697"/>
<dbReference type="KEGG" id="sea:SeAg_B3387"/>
<dbReference type="HOGENOM" id="CLU_006233_0_1_6"/>
<dbReference type="Proteomes" id="UP000008819">
    <property type="component" value="Chromosome"/>
</dbReference>
<dbReference type="GO" id="GO:0005829">
    <property type="term" value="C:cytosol"/>
    <property type="evidence" value="ECO:0007669"/>
    <property type="project" value="TreeGrafter"/>
</dbReference>
<dbReference type="GO" id="GO:0008882">
    <property type="term" value="F:[glutamate-ammonia-ligase] adenylyltransferase activity"/>
    <property type="evidence" value="ECO:0007669"/>
    <property type="project" value="UniProtKB-UniRule"/>
</dbReference>
<dbReference type="GO" id="GO:0047388">
    <property type="term" value="F:[glutamine synthetase]-adenylyl-L-tyrosine phosphorylase activity"/>
    <property type="evidence" value="ECO:0007669"/>
    <property type="project" value="UniProtKB-EC"/>
</dbReference>
<dbReference type="GO" id="GO:0005524">
    <property type="term" value="F:ATP binding"/>
    <property type="evidence" value="ECO:0007669"/>
    <property type="project" value="UniProtKB-UniRule"/>
</dbReference>
<dbReference type="GO" id="GO:0000287">
    <property type="term" value="F:magnesium ion binding"/>
    <property type="evidence" value="ECO:0007669"/>
    <property type="project" value="UniProtKB-UniRule"/>
</dbReference>
<dbReference type="GO" id="GO:0000820">
    <property type="term" value="P:regulation of glutamine family amino acid metabolic process"/>
    <property type="evidence" value="ECO:0007669"/>
    <property type="project" value="UniProtKB-UniRule"/>
</dbReference>
<dbReference type="CDD" id="cd05401">
    <property type="entry name" value="NT_GlnE_GlnD_like"/>
    <property type="match status" value="2"/>
</dbReference>
<dbReference type="FunFam" id="1.10.4050.10:FF:000001">
    <property type="entry name" value="Bifunctional glutamine synthetase adenylyltransferase/adenylyl-removing enzyme"/>
    <property type="match status" value="1"/>
</dbReference>
<dbReference type="FunFam" id="1.20.120.1510:FF:000001">
    <property type="entry name" value="Bifunctional glutamine synthetase adenylyltransferase/adenylyl-removing enzyme"/>
    <property type="match status" value="1"/>
</dbReference>
<dbReference type="FunFam" id="1.20.120.330:FF:000005">
    <property type="entry name" value="Bifunctional glutamine synthetase adenylyltransferase/adenylyl-removing enzyme"/>
    <property type="match status" value="1"/>
</dbReference>
<dbReference type="FunFam" id="1.20.120.330:FF:000008">
    <property type="entry name" value="Bifunctional glutamine synthetase adenylyltransferase/adenylyl-removing enzyme"/>
    <property type="match status" value="1"/>
</dbReference>
<dbReference type="FunFam" id="3.30.460.10:FF:000009">
    <property type="entry name" value="Bifunctional glutamine synthetase adenylyltransferase/adenylyl-removing enzyme"/>
    <property type="match status" value="1"/>
</dbReference>
<dbReference type="FunFam" id="3.30.460.10:FF:000014">
    <property type="entry name" value="Bifunctional glutamine synthetase adenylyltransferase/adenylyl-removing enzyme"/>
    <property type="match status" value="1"/>
</dbReference>
<dbReference type="Gene3D" id="1.20.120.1510">
    <property type="match status" value="1"/>
</dbReference>
<dbReference type="Gene3D" id="3.30.460.10">
    <property type="entry name" value="Beta Polymerase, domain 2"/>
    <property type="match status" value="2"/>
</dbReference>
<dbReference type="Gene3D" id="1.10.4050.10">
    <property type="entry name" value="Glutamine synthase adenylyltransferase GlnE"/>
    <property type="match status" value="1"/>
</dbReference>
<dbReference type="Gene3D" id="1.20.120.330">
    <property type="entry name" value="Nucleotidyltransferases domain 2"/>
    <property type="match status" value="2"/>
</dbReference>
<dbReference type="HAMAP" id="MF_00802">
    <property type="entry name" value="GlnE"/>
    <property type="match status" value="1"/>
</dbReference>
<dbReference type="InterPro" id="IPR023057">
    <property type="entry name" value="GlnE"/>
</dbReference>
<dbReference type="InterPro" id="IPR005190">
    <property type="entry name" value="GlnE_rpt_dom"/>
</dbReference>
<dbReference type="InterPro" id="IPR043519">
    <property type="entry name" value="NT_sf"/>
</dbReference>
<dbReference type="InterPro" id="IPR013546">
    <property type="entry name" value="PII_UdlTrfase/GS_AdlTrfase"/>
</dbReference>
<dbReference type="NCBIfam" id="NF008292">
    <property type="entry name" value="PRK11072.1"/>
    <property type="match status" value="1"/>
</dbReference>
<dbReference type="PANTHER" id="PTHR30621:SF0">
    <property type="entry name" value="BIFUNCTIONAL GLUTAMINE SYNTHETASE ADENYLYLTRANSFERASE_ADENYLYL-REMOVING ENZYME"/>
    <property type="match status" value="1"/>
</dbReference>
<dbReference type="PANTHER" id="PTHR30621">
    <property type="entry name" value="GLUTAMINE SYNTHETASE ADENYLYLTRANSFERASE"/>
    <property type="match status" value="1"/>
</dbReference>
<dbReference type="Pfam" id="PF08335">
    <property type="entry name" value="GlnD_UR_UTase"/>
    <property type="match status" value="2"/>
</dbReference>
<dbReference type="Pfam" id="PF03710">
    <property type="entry name" value="GlnE"/>
    <property type="match status" value="2"/>
</dbReference>
<dbReference type="SUPFAM" id="SSF81301">
    <property type="entry name" value="Nucleotidyltransferase"/>
    <property type="match status" value="2"/>
</dbReference>
<dbReference type="SUPFAM" id="SSF81593">
    <property type="entry name" value="Nucleotidyltransferase substrate binding subunit/domain"/>
    <property type="match status" value="2"/>
</dbReference>
<gene>
    <name evidence="1" type="primary">glnE</name>
    <name type="ordered locus">SeAg_B3387</name>
</gene>
<comment type="function">
    <text evidence="1">Involved in the regulation of glutamine synthetase GlnA, a key enzyme in the process to assimilate ammonia. When cellular nitrogen levels are high, the C-terminal adenylyl transferase (AT) inactivates GlnA by covalent transfer of an adenylyl group from ATP to specific tyrosine residue of GlnA, thus reducing its activity. Conversely, when nitrogen levels are low, the N-terminal adenylyl removase (AR) activates GlnA by removing the adenylyl group by phosphorolysis, increasing its activity. The regulatory region of GlnE binds the signal transduction protein PII (GlnB) which indicates the nitrogen status of the cell.</text>
</comment>
<comment type="catalytic activity">
    <reaction evidence="1">
        <text>[glutamine synthetase]-O(4)-(5'-adenylyl)-L-tyrosine + phosphate = [glutamine synthetase]-L-tyrosine + ADP</text>
        <dbReference type="Rhea" id="RHEA:43716"/>
        <dbReference type="Rhea" id="RHEA-COMP:10660"/>
        <dbReference type="Rhea" id="RHEA-COMP:10661"/>
        <dbReference type="ChEBI" id="CHEBI:43474"/>
        <dbReference type="ChEBI" id="CHEBI:46858"/>
        <dbReference type="ChEBI" id="CHEBI:83624"/>
        <dbReference type="ChEBI" id="CHEBI:456216"/>
        <dbReference type="EC" id="2.7.7.89"/>
    </reaction>
</comment>
<comment type="catalytic activity">
    <reaction evidence="1">
        <text>[glutamine synthetase]-L-tyrosine + ATP = [glutamine synthetase]-O(4)-(5'-adenylyl)-L-tyrosine + diphosphate</text>
        <dbReference type="Rhea" id="RHEA:18589"/>
        <dbReference type="Rhea" id="RHEA-COMP:10660"/>
        <dbReference type="Rhea" id="RHEA-COMP:10661"/>
        <dbReference type="ChEBI" id="CHEBI:30616"/>
        <dbReference type="ChEBI" id="CHEBI:33019"/>
        <dbReference type="ChEBI" id="CHEBI:46858"/>
        <dbReference type="ChEBI" id="CHEBI:83624"/>
        <dbReference type="EC" id="2.7.7.42"/>
    </reaction>
</comment>
<comment type="cofactor">
    <cofactor evidence="1">
        <name>Mg(2+)</name>
        <dbReference type="ChEBI" id="CHEBI:18420"/>
    </cofactor>
</comment>
<comment type="similarity">
    <text evidence="1">Belongs to the GlnE family.</text>
</comment>
<organism>
    <name type="scientific">Salmonella agona (strain SL483)</name>
    <dbReference type="NCBI Taxonomy" id="454166"/>
    <lineage>
        <taxon>Bacteria</taxon>
        <taxon>Pseudomonadati</taxon>
        <taxon>Pseudomonadota</taxon>
        <taxon>Gammaproteobacteria</taxon>
        <taxon>Enterobacterales</taxon>
        <taxon>Enterobacteriaceae</taxon>
        <taxon>Salmonella</taxon>
    </lineage>
</organism>
<sequence length="947" mass="108019">MTPLSSPLSQYWQTVVERLPEGFTETSLSVQAKSVLTFSDFALDSVIAHPEWLAELESASPQADEWRHYAGWLQEALAGVCDDASLMRELRLFRRRIMVRIAWAQTLSLVDDETILQQLSHLAETLIVGARDWLYAACCREWGTPCNPQGVPQPLLILGMGKLGGGELNFSSDIDLIFAWPEHGETRGGRRELDNAQFFTRLGQRLIKALDQPTMDGFVYRVDMRLRPFGDSGPLVLSFAALEDYYQEQGRDWERYAMVKARLMGDNDDAWSRELRAMLRPFVFRRYIDFSVIQSLRNMKGMIAREVRRRGLKDNIKLGAGGIREIEFIVQVFQLIRGGREPSLQSRSLLPTLDAIAALHLLPENDVAQLRVAYLFLRRLENLLQSINDEQTQTLPADDLNRARLAWGMKAENWPQLVGELTDHMANVRRVFNELIGDDEADTPQEEERSEPWREVWQDALQEDDSTPVLAHLADEDRRQVLTLIADFRKELDKRPIGPRGRQVLDQLMPHLLADVCSREDAAVTLSRITPLLAGIVTRTTYLELLSEFPGALKHLIMLCAASPMIASQLARYPLLLDELLDPGTLYQPTATDAYRDELRQYLLRVPEEDEEQQLEALRQFKQAQLLRIAAADIAGTLPVMKVSDHLTWLAEAMIDAVVQQAWTQMVARYGQPAHLDERQGRGFAVVGYGKLGGWELGYSSDLDLIFLHDCPMDVMTNGEREIDGRQFYLRLAQRIMHLFSTRTSSGILYEVDARLRPSGAAGMLVTSADAFADYQQHEAWTWEHQALVRARVVYGDPQLTSQFDTVRRTIMTTARDGKTLQTEVREMREKMRAHLGNKHRDRFDIKADEGGITDIEFIAQYLVLRYAHEKPKLTRWSDNVRILELLAQNGIMDEHEAQALTVAYTTLRDELHHLALQELPGHVAQTCFSKERALVQASWRKWLVAV</sequence>
<proteinExistence type="inferred from homology"/>
<evidence type="ECO:0000255" key="1">
    <source>
        <dbReference type="HAMAP-Rule" id="MF_00802"/>
    </source>
</evidence>
<accession>B5F697</accession>
<name>GLNE_SALA4</name>
<feature type="chain" id="PRO_1000133910" description="Bifunctional glutamine synthetase adenylyltransferase/adenylyl-removing enzyme">
    <location>
        <begin position="1"/>
        <end position="947"/>
    </location>
</feature>
<feature type="region of interest" description="Adenylyl removase" evidence="1">
    <location>
        <begin position="1"/>
        <end position="440"/>
    </location>
</feature>
<feature type="region of interest" description="Adenylyl transferase" evidence="1">
    <location>
        <begin position="450"/>
        <end position="947"/>
    </location>
</feature>